<evidence type="ECO:0000255" key="1">
    <source>
        <dbReference type="HAMAP-Rule" id="MF_01364"/>
    </source>
</evidence>
<evidence type="ECO:0000305" key="2"/>
<comment type="function">
    <text evidence="1">Binds 16S rRNA, required for the assembly of 30S particles and may also be responsible for determining the conformation of the 16S rRNA at the A site.</text>
</comment>
<comment type="cofactor">
    <cofactor evidence="1">
        <name>Zn(2+)</name>
        <dbReference type="ChEBI" id="CHEBI:29105"/>
    </cofactor>
    <text evidence="1">Binds 1 zinc ion per subunit.</text>
</comment>
<comment type="subunit">
    <text evidence="1">Part of the 30S ribosomal subunit. Contacts proteins S3 and S10.</text>
</comment>
<comment type="similarity">
    <text evidence="1">Belongs to the universal ribosomal protein uS14 family. Zinc-binding uS14 subfamily.</text>
</comment>
<dbReference type="EMBL" id="CP001390">
    <property type="protein sequence ID" value="ACM21953.1"/>
    <property type="molecule type" value="Genomic_DNA"/>
</dbReference>
<dbReference type="SMR" id="B9M6G5"/>
<dbReference type="STRING" id="316067.Geob_3612"/>
<dbReference type="KEGG" id="geo:Geob_3612"/>
<dbReference type="eggNOG" id="COG0199">
    <property type="taxonomic scope" value="Bacteria"/>
</dbReference>
<dbReference type="HOGENOM" id="CLU_139869_3_0_7"/>
<dbReference type="OrthoDB" id="9810484at2"/>
<dbReference type="Proteomes" id="UP000007721">
    <property type="component" value="Chromosome"/>
</dbReference>
<dbReference type="GO" id="GO:0005737">
    <property type="term" value="C:cytoplasm"/>
    <property type="evidence" value="ECO:0007669"/>
    <property type="project" value="UniProtKB-ARBA"/>
</dbReference>
<dbReference type="GO" id="GO:0015935">
    <property type="term" value="C:small ribosomal subunit"/>
    <property type="evidence" value="ECO:0007669"/>
    <property type="project" value="TreeGrafter"/>
</dbReference>
<dbReference type="GO" id="GO:0019843">
    <property type="term" value="F:rRNA binding"/>
    <property type="evidence" value="ECO:0007669"/>
    <property type="project" value="UniProtKB-UniRule"/>
</dbReference>
<dbReference type="GO" id="GO:0003735">
    <property type="term" value="F:structural constituent of ribosome"/>
    <property type="evidence" value="ECO:0007669"/>
    <property type="project" value="InterPro"/>
</dbReference>
<dbReference type="GO" id="GO:0008270">
    <property type="term" value="F:zinc ion binding"/>
    <property type="evidence" value="ECO:0007669"/>
    <property type="project" value="UniProtKB-UniRule"/>
</dbReference>
<dbReference type="GO" id="GO:0006412">
    <property type="term" value="P:translation"/>
    <property type="evidence" value="ECO:0007669"/>
    <property type="project" value="UniProtKB-UniRule"/>
</dbReference>
<dbReference type="FunFam" id="4.10.830.10:FF:000001">
    <property type="entry name" value="30S ribosomal protein S14 type Z"/>
    <property type="match status" value="1"/>
</dbReference>
<dbReference type="Gene3D" id="4.10.830.10">
    <property type="entry name" value="30s Ribosomal Protein S14, Chain N"/>
    <property type="match status" value="1"/>
</dbReference>
<dbReference type="HAMAP" id="MF_01364_B">
    <property type="entry name" value="Ribosomal_uS14_2_B"/>
    <property type="match status" value="1"/>
</dbReference>
<dbReference type="InterPro" id="IPR001209">
    <property type="entry name" value="Ribosomal_uS14"/>
</dbReference>
<dbReference type="InterPro" id="IPR023053">
    <property type="entry name" value="Ribosomal_uS14_bact"/>
</dbReference>
<dbReference type="InterPro" id="IPR018271">
    <property type="entry name" value="Ribosomal_uS14_CS"/>
</dbReference>
<dbReference type="InterPro" id="IPR043140">
    <property type="entry name" value="Ribosomal_uS14_sf"/>
</dbReference>
<dbReference type="NCBIfam" id="NF005974">
    <property type="entry name" value="PRK08061.1"/>
    <property type="match status" value="1"/>
</dbReference>
<dbReference type="PANTHER" id="PTHR19836">
    <property type="entry name" value="30S RIBOSOMAL PROTEIN S14"/>
    <property type="match status" value="1"/>
</dbReference>
<dbReference type="PANTHER" id="PTHR19836:SF19">
    <property type="entry name" value="SMALL RIBOSOMAL SUBUNIT PROTEIN US14M"/>
    <property type="match status" value="1"/>
</dbReference>
<dbReference type="Pfam" id="PF00253">
    <property type="entry name" value="Ribosomal_S14"/>
    <property type="match status" value="1"/>
</dbReference>
<dbReference type="SUPFAM" id="SSF57716">
    <property type="entry name" value="Glucocorticoid receptor-like (DNA-binding domain)"/>
    <property type="match status" value="1"/>
</dbReference>
<dbReference type="PROSITE" id="PS00527">
    <property type="entry name" value="RIBOSOMAL_S14"/>
    <property type="match status" value="1"/>
</dbReference>
<protein>
    <recommendedName>
        <fullName evidence="1">Small ribosomal subunit protein uS14</fullName>
    </recommendedName>
    <alternativeName>
        <fullName evidence="2">30S ribosomal protein S14 type Z</fullName>
    </alternativeName>
</protein>
<organism>
    <name type="scientific">Geotalea daltonii (strain DSM 22248 / JCM 15807 / FRC-32)</name>
    <name type="common">Geobacter daltonii</name>
    <dbReference type="NCBI Taxonomy" id="316067"/>
    <lineage>
        <taxon>Bacteria</taxon>
        <taxon>Pseudomonadati</taxon>
        <taxon>Thermodesulfobacteriota</taxon>
        <taxon>Desulfuromonadia</taxon>
        <taxon>Geobacterales</taxon>
        <taxon>Geobacteraceae</taxon>
        <taxon>Geotalea</taxon>
    </lineage>
</organism>
<accession>B9M6G5</accession>
<sequence>MAKTSMIIKAQRGSKFKVREYNRCPLCGRPRAYYRKFDMCRICLRKLASSGQIPGVIKSSW</sequence>
<gene>
    <name evidence="1" type="primary">rpsZ</name>
    <name evidence="1" type="synonym">rpsN</name>
    <name type="ordered locus">Geob_3612</name>
</gene>
<reference key="1">
    <citation type="submission" date="2009-01" db="EMBL/GenBank/DDBJ databases">
        <title>Complete sequence of Geobacter sp. FRC-32.</title>
        <authorList>
            <consortium name="US DOE Joint Genome Institute"/>
            <person name="Lucas S."/>
            <person name="Copeland A."/>
            <person name="Lapidus A."/>
            <person name="Glavina del Rio T."/>
            <person name="Dalin E."/>
            <person name="Tice H."/>
            <person name="Bruce D."/>
            <person name="Goodwin L."/>
            <person name="Pitluck S."/>
            <person name="Saunders E."/>
            <person name="Brettin T."/>
            <person name="Detter J.C."/>
            <person name="Han C."/>
            <person name="Larimer F."/>
            <person name="Land M."/>
            <person name="Hauser L."/>
            <person name="Kyrpides N."/>
            <person name="Ovchinnikova G."/>
            <person name="Kostka J."/>
            <person name="Richardson P."/>
        </authorList>
    </citation>
    <scope>NUCLEOTIDE SEQUENCE [LARGE SCALE GENOMIC DNA]</scope>
    <source>
        <strain>DSM 22248 / JCM 15807 / FRC-32</strain>
    </source>
</reference>
<name>RS14Z_GEODF</name>
<proteinExistence type="inferred from homology"/>
<keyword id="KW-0479">Metal-binding</keyword>
<keyword id="KW-1185">Reference proteome</keyword>
<keyword id="KW-0687">Ribonucleoprotein</keyword>
<keyword id="KW-0689">Ribosomal protein</keyword>
<keyword id="KW-0694">RNA-binding</keyword>
<keyword id="KW-0699">rRNA-binding</keyword>
<keyword id="KW-0862">Zinc</keyword>
<feature type="chain" id="PRO_1000166769" description="Small ribosomal subunit protein uS14">
    <location>
        <begin position="1"/>
        <end position="61"/>
    </location>
</feature>
<feature type="binding site" evidence="1">
    <location>
        <position position="24"/>
    </location>
    <ligand>
        <name>Zn(2+)</name>
        <dbReference type="ChEBI" id="CHEBI:29105"/>
    </ligand>
</feature>
<feature type="binding site" evidence="1">
    <location>
        <position position="27"/>
    </location>
    <ligand>
        <name>Zn(2+)</name>
        <dbReference type="ChEBI" id="CHEBI:29105"/>
    </ligand>
</feature>
<feature type="binding site" evidence="1">
    <location>
        <position position="40"/>
    </location>
    <ligand>
        <name>Zn(2+)</name>
        <dbReference type="ChEBI" id="CHEBI:29105"/>
    </ligand>
</feature>
<feature type="binding site" evidence="1">
    <location>
        <position position="43"/>
    </location>
    <ligand>
        <name>Zn(2+)</name>
        <dbReference type="ChEBI" id="CHEBI:29105"/>
    </ligand>
</feature>